<protein>
    <recommendedName>
        <fullName>Serine/threonine-protein kinase NLK</fullName>
        <ecNumber evidence="1">2.7.11.24</ecNumber>
    </recommendedName>
    <alternativeName>
        <fullName>Nemo-like kinase</fullName>
    </alternativeName>
</protein>
<name>NLK_CANLF</name>
<sequence length="527" mass="58297">MSLCGARANAKMMAAYNGGTSAAAAGHHHHHHHHLPHLPPPHLHHHHHPQHHLHPGSAAAVHPVQQHTSSAAAAAAAAAAAAAMLNPGQQQPYFPSPAPGQAPGPAAAAPAQVQAAAAATVKAHHHQHSHHPQQQLDIEPDRPIGYGAFGVVWSVTDPRDGKRVALKKMPNVFQNLVSCKRVFRELKMLCFFKHDNVLSALDILQPPHIDYFEEIYVVTELMQSDLHKIIVSPQPLSSDHVKVFLYQILRGLKYLHSAGILHRDIKPGNLLVNSNCVLKICDFGLARVEELDESRHMTQEVVTQYYRAPEILMGSRHYSNAIDIWSVGCIFAELLGRRILFQAQSPIQQLDLITDLLGTPSLEAMRTACEGAKAHILRGPHKQPSLPVLYTLSSQATHEAVHLLCRMLVFDPSKRISAKDALAHPYLDEGRLRYHTCMCKCCFSTSTGRVYTSDFEPITNPKFDDTFEKNLSSVRQVKEIIHQFILEQQKGNRVPLCINPQSAAFKSFISSTVAQPSEMPPSPLVWE</sequence>
<gene>
    <name type="primary">NLK</name>
</gene>
<accession>E2QWQ2</accession>
<dbReference type="EC" id="2.7.11.24" evidence="1"/>
<dbReference type="EMBL" id="AAEX02035279">
    <property type="status" value="NOT_ANNOTATED_CDS"/>
    <property type="molecule type" value="Genomic_DNA"/>
</dbReference>
<dbReference type="RefSeq" id="XP_038404148.1">
    <property type="nucleotide sequence ID" value="XM_038548220.1"/>
</dbReference>
<dbReference type="RefSeq" id="XP_038533370.1">
    <property type="nucleotide sequence ID" value="XM_038677442.1"/>
</dbReference>
<dbReference type="RefSeq" id="XP_868108.2">
    <property type="nucleotide sequence ID" value="XM_863015.6"/>
</dbReference>
<dbReference type="SMR" id="E2QWQ2"/>
<dbReference type="FunCoup" id="E2QWQ2">
    <property type="interactions" value="2611"/>
</dbReference>
<dbReference type="STRING" id="9615.ENSCAFP00000027521"/>
<dbReference type="PaxDb" id="9612-ENSCAFP00000027521"/>
<dbReference type="Ensembl" id="ENSCAFT00000075065.2">
    <property type="protein sequence ID" value="ENSCAFP00000053136.2"/>
    <property type="gene ID" value="ENSCAFG00000018650.6"/>
</dbReference>
<dbReference type="Ensembl" id="ENSCAFT00030026163.1">
    <property type="protein sequence ID" value="ENSCAFP00030022847.1"/>
    <property type="gene ID" value="ENSCAFG00030014127.1"/>
</dbReference>
<dbReference type="Ensembl" id="ENSCAFT00040036745.1">
    <property type="protein sequence ID" value="ENSCAFP00040032009.1"/>
    <property type="gene ID" value="ENSCAFG00040019853.1"/>
</dbReference>
<dbReference type="Ensembl" id="ENSCAFT00845027063.1">
    <property type="protein sequence ID" value="ENSCAFP00845021296.1"/>
    <property type="gene ID" value="ENSCAFG00845015154.1"/>
</dbReference>
<dbReference type="GeneID" id="491160"/>
<dbReference type="KEGG" id="cfa:491160"/>
<dbReference type="CTD" id="51701"/>
<dbReference type="VEuPathDB" id="HostDB:ENSCAFG00845015154"/>
<dbReference type="VGNC" id="VGNC:43841">
    <property type="gene designation" value="NLK"/>
</dbReference>
<dbReference type="eggNOG" id="KOG0664">
    <property type="taxonomic scope" value="Eukaryota"/>
</dbReference>
<dbReference type="GeneTree" id="ENSGT00940000158363"/>
<dbReference type="HOGENOM" id="CLU_000288_133_2_1"/>
<dbReference type="InParanoid" id="E2QWQ2"/>
<dbReference type="OMA" id="QNMTHEV"/>
<dbReference type="OrthoDB" id="192887at2759"/>
<dbReference type="TreeFam" id="TF315210"/>
<dbReference type="Reactome" id="R-CFA-4086398">
    <property type="pathway name" value="Ca2+ pathway"/>
</dbReference>
<dbReference type="Proteomes" id="UP000002254">
    <property type="component" value="Chromosome 9"/>
</dbReference>
<dbReference type="Proteomes" id="UP000694429">
    <property type="component" value="Chromosome 9"/>
</dbReference>
<dbReference type="Proteomes" id="UP000694542">
    <property type="component" value="Chromosome 9"/>
</dbReference>
<dbReference type="Proteomes" id="UP000805418">
    <property type="component" value="Chromosome 9"/>
</dbReference>
<dbReference type="Bgee" id="ENSCAFG00000018650">
    <property type="expression patterns" value="Expressed in occipital cortex and 46 other cell types or tissues"/>
</dbReference>
<dbReference type="GO" id="GO:0005737">
    <property type="term" value="C:cytoplasm"/>
    <property type="evidence" value="ECO:0000318"/>
    <property type="project" value="GO_Central"/>
</dbReference>
<dbReference type="GO" id="GO:0005634">
    <property type="term" value="C:nucleus"/>
    <property type="evidence" value="ECO:0000318"/>
    <property type="project" value="GO_Central"/>
</dbReference>
<dbReference type="GO" id="GO:0005524">
    <property type="term" value="F:ATP binding"/>
    <property type="evidence" value="ECO:0007669"/>
    <property type="project" value="UniProtKB-KW"/>
</dbReference>
<dbReference type="GO" id="GO:0140297">
    <property type="term" value="F:DNA-binding transcription factor binding"/>
    <property type="evidence" value="ECO:0007669"/>
    <property type="project" value="Ensembl"/>
</dbReference>
<dbReference type="GO" id="GO:0000287">
    <property type="term" value="F:magnesium ion binding"/>
    <property type="evidence" value="ECO:0007669"/>
    <property type="project" value="Ensembl"/>
</dbReference>
<dbReference type="GO" id="GO:0004707">
    <property type="term" value="F:MAP kinase activity"/>
    <property type="evidence" value="ECO:0007669"/>
    <property type="project" value="UniProtKB-EC"/>
</dbReference>
<dbReference type="GO" id="GO:0106310">
    <property type="term" value="F:protein serine kinase activity"/>
    <property type="evidence" value="ECO:0007669"/>
    <property type="project" value="RHEA"/>
</dbReference>
<dbReference type="GO" id="GO:0004674">
    <property type="term" value="F:protein serine/threonine kinase activity"/>
    <property type="evidence" value="ECO:0000250"/>
    <property type="project" value="UniProtKB"/>
</dbReference>
<dbReference type="GO" id="GO:0042169">
    <property type="term" value="F:SH2 domain binding"/>
    <property type="evidence" value="ECO:0007669"/>
    <property type="project" value="Ensembl"/>
</dbReference>
<dbReference type="GO" id="GO:0031625">
    <property type="term" value="F:ubiquitin protein ligase binding"/>
    <property type="evidence" value="ECO:0007669"/>
    <property type="project" value="Ensembl"/>
</dbReference>
<dbReference type="GO" id="GO:0071470">
    <property type="term" value="P:cellular response to osmotic stress"/>
    <property type="evidence" value="ECO:0007669"/>
    <property type="project" value="Ensembl"/>
</dbReference>
<dbReference type="GO" id="GO:0035556">
    <property type="term" value="P:intracellular signal transduction"/>
    <property type="evidence" value="ECO:0000318"/>
    <property type="project" value="GO_Central"/>
</dbReference>
<dbReference type="GO" id="GO:1904262">
    <property type="term" value="P:negative regulation of TORC1 signaling"/>
    <property type="evidence" value="ECO:0000250"/>
    <property type="project" value="UniProtKB"/>
</dbReference>
<dbReference type="GO" id="GO:0030178">
    <property type="term" value="P:negative regulation of Wnt signaling pathway"/>
    <property type="evidence" value="ECO:0007669"/>
    <property type="project" value="Ensembl"/>
</dbReference>
<dbReference type="GO" id="GO:1904894">
    <property type="term" value="P:positive regulation of receptor signaling pathway via STAT"/>
    <property type="evidence" value="ECO:0007669"/>
    <property type="project" value="Ensembl"/>
</dbReference>
<dbReference type="GO" id="GO:0050821">
    <property type="term" value="P:protein stabilization"/>
    <property type="evidence" value="ECO:0000250"/>
    <property type="project" value="UniProtKB"/>
</dbReference>
<dbReference type="GO" id="GO:0006355">
    <property type="term" value="P:regulation of DNA-templated transcription"/>
    <property type="evidence" value="ECO:0007669"/>
    <property type="project" value="Ensembl"/>
</dbReference>
<dbReference type="GO" id="GO:0007179">
    <property type="term" value="P:transforming growth factor beta receptor signaling pathway"/>
    <property type="evidence" value="ECO:0007669"/>
    <property type="project" value="Ensembl"/>
</dbReference>
<dbReference type="GO" id="GO:0016055">
    <property type="term" value="P:Wnt signaling pathway"/>
    <property type="evidence" value="ECO:0007669"/>
    <property type="project" value="UniProtKB-KW"/>
</dbReference>
<dbReference type="CDD" id="cd07853">
    <property type="entry name" value="STKc_NLK"/>
    <property type="match status" value="1"/>
</dbReference>
<dbReference type="FunFam" id="1.10.510.10:FF:000162">
    <property type="entry name" value="Mitogen-activated protein kinase"/>
    <property type="match status" value="1"/>
</dbReference>
<dbReference type="FunFam" id="3.30.200.20:FF:000164">
    <property type="entry name" value="Mitogen-activated protein kinase"/>
    <property type="match status" value="1"/>
</dbReference>
<dbReference type="Gene3D" id="3.30.200.20">
    <property type="entry name" value="Phosphorylase Kinase, domain 1"/>
    <property type="match status" value="1"/>
</dbReference>
<dbReference type="Gene3D" id="1.10.510.10">
    <property type="entry name" value="Transferase(Phosphotransferase) domain 1"/>
    <property type="match status" value="1"/>
</dbReference>
<dbReference type="InterPro" id="IPR011009">
    <property type="entry name" value="Kinase-like_dom_sf"/>
</dbReference>
<dbReference type="InterPro" id="IPR050117">
    <property type="entry name" value="MAP_kinase"/>
</dbReference>
<dbReference type="InterPro" id="IPR003527">
    <property type="entry name" value="MAP_kinase_CS"/>
</dbReference>
<dbReference type="InterPro" id="IPR000719">
    <property type="entry name" value="Prot_kinase_dom"/>
</dbReference>
<dbReference type="InterPro" id="IPR017441">
    <property type="entry name" value="Protein_kinase_ATP_BS"/>
</dbReference>
<dbReference type="InterPro" id="IPR008271">
    <property type="entry name" value="Ser/Thr_kinase_AS"/>
</dbReference>
<dbReference type="PANTHER" id="PTHR24055">
    <property type="entry name" value="MITOGEN-ACTIVATED PROTEIN KINASE"/>
    <property type="match status" value="1"/>
</dbReference>
<dbReference type="Pfam" id="PF00069">
    <property type="entry name" value="Pkinase"/>
    <property type="match status" value="1"/>
</dbReference>
<dbReference type="SMART" id="SM00220">
    <property type="entry name" value="S_TKc"/>
    <property type="match status" value="1"/>
</dbReference>
<dbReference type="SUPFAM" id="SSF56112">
    <property type="entry name" value="Protein kinase-like (PK-like)"/>
    <property type="match status" value="1"/>
</dbReference>
<dbReference type="PROSITE" id="PS01351">
    <property type="entry name" value="MAPK"/>
    <property type="match status" value="1"/>
</dbReference>
<dbReference type="PROSITE" id="PS00107">
    <property type="entry name" value="PROTEIN_KINASE_ATP"/>
    <property type="match status" value="1"/>
</dbReference>
<dbReference type="PROSITE" id="PS50011">
    <property type="entry name" value="PROTEIN_KINASE_DOM"/>
    <property type="match status" value="1"/>
</dbReference>
<dbReference type="PROSITE" id="PS00108">
    <property type="entry name" value="PROTEIN_KINASE_ST"/>
    <property type="match status" value="1"/>
</dbReference>
<feature type="chain" id="PRO_0000413530" description="Serine/threonine-protein kinase NLK">
    <location>
        <begin position="1"/>
        <end position="527"/>
    </location>
</feature>
<feature type="domain" description="Protein kinase" evidence="3">
    <location>
        <begin position="138"/>
        <end position="427"/>
    </location>
</feature>
<feature type="region of interest" description="Required for interaction with TAB2" evidence="1">
    <location>
        <begin position="1"/>
        <end position="304"/>
    </location>
</feature>
<feature type="region of interest" description="Sufficient for interaction with DAPK3" evidence="2">
    <location>
        <begin position="1"/>
        <end position="125"/>
    </location>
</feature>
<feature type="region of interest" description="Disordered" evidence="5">
    <location>
        <begin position="22"/>
        <end position="72"/>
    </location>
</feature>
<feature type="region of interest" description="Disordered" evidence="5">
    <location>
        <begin position="90"/>
        <end position="140"/>
    </location>
</feature>
<feature type="region of interest" description="Sufficient for interaction with DAPK3" evidence="2">
    <location>
        <begin position="124"/>
        <end position="416"/>
    </location>
</feature>
<feature type="region of interest" description="Required for homodimerization and kinase activation and localization to the nucleus" evidence="1">
    <location>
        <begin position="428"/>
        <end position="527"/>
    </location>
</feature>
<feature type="region of interest" description="Required for interaction with TAB2" evidence="1">
    <location>
        <begin position="434"/>
        <end position="527"/>
    </location>
</feature>
<feature type="short sequence motif" description="TQE">
    <location>
        <begin position="298"/>
        <end position="300"/>
    </location>
</feature>
<feature type="compositionally biased region" description="Basic residues" evidence="5">
    <location>
        <begin position="26"/>
        <end position="54"/>
    </location>
</feature>
<feature type="compositionally biased region" description="Low complexity" evidence="5">
    <location>
        <begin position="103"/>
        <end position="119"/>
    </location>
</feature>
<feature type="compositionally biased region" description="Basic residues" evidence="5">
    <location>
        <begin position="122"/>
        <end position="131"/>
    </location>
</feature>
<feature type="active site" description="Proton acceptor" evidence="3 4">
    <location>
        <position position="264"/>
    </location>
</feature>
<feature type="binding site" evidence="3">
    <location>
        <begin position="144"/>
        <end position="152"/>
    </location>
    <ligand>
        <name>ATP</name>
        <dbReference type="ChEBI" id="CHEBI:30616"/>
    </ligand>
</feature>
<feature type="binding site" evidence="3">
    <location>
        <position position="167"/>
    </location>
    <ligand>
        <name>ATP</name>
        <dbReference type="ChEBI" id="CHEBI:30616"/>
    </ligand>
</feature>
<feature type="modified residue" description="Phosphothreonine; by autocatalysis" evidence="2">
    <location>
        <position position="298"/>
    </location>
</feature>
<feature type="modified residue" description="Phosphoserine" evidence="2">
    <location>
        <position position="522"/>
    </location>
</feature>
<evidence type="ECO:0000250" key="1">
    <source>
        <dbReference type="UniProtKB" id="O54949"/>
    </source>
</evidence>
<evidence type="ECO:0000250" key="2">
    <source>
        <dbReference type="UniProtKB" id="Q9UBE8"/>
    </source>
</evidence>
<evidence type="ECO:0000255" key="3">
    <source>
        <dbReference type="PROSITE-ProRule" id="PRU00159"/>
    </source>
</evidence>
<evidence type="ECO:0000255" key="4">
    <source>
        <dbReference type="PROSITE-ProRule" id="PRU10027"/>
    </source>
</evidence>
<evidence type="ECO:0000256" key="5">
    <source>
        <dbReference type="SAM" id="MobiDB-lite"/>
    </source>
</evidence>
<evidence type="ECO:0000305" key="6"/>
<reference key="1">
    <citation type="journal article" date="2005" name="Nature">
        <title>Genome sequence, comparative analysis and haplotype structure of the domestic dog.</title>
        <authorList>
            <person name="Lindblad-Toh K."/>
            <person name="Wade C.M."/>
            <person name="Mikkelsen T.S."/>
            <person name="Karlsson E.K."/>
            <person name="Jaffe D.B."/>
            <person name="Kamal M."/>
            <person name="Clamp M."/>
            <person name="Chang J.L."/>
            <person name="Kulbokas E.J. III"/>
            <person name="Zody M.C."/>
            <person name="Mauceli E."/>
            <person name="Xie X."/>
            <person name="Breen M."/>
            <person name="Wayne R.K."/>
            <person name="Ostrander E.A."/>
            <person name="Ponting C.P."/>
            <person name="Galibert F."/>
            <person name="Smith D.R."/>
            <person name="deJong P.J."/>
            <person name="Kirkness E.F."/>
            <person name="Alvarez P."/>
            <person name="Biagi T."/>
            <person name="Brockman W."/>
            <person name="Butler J."/>
            <person name="Chin C.-W."/>
            <person name="Cook A."/>
            <person name="Cuff J."/>
            <person name="Daly M.J."/>
            <person name="DeCaprio D."/>
            <person name="Gnerre S."/>
            <person name="Grabherr M."/>
            <person name="Kellis M."/>
            <person name="Kleber M."/>
            <person name="Bardeleben C."/>
            <person name="Goodstadt L."/>
            <person name="Heger A."/>
            <person name="Hitte C."/>
            <person name="Kim L."/>
            <person name="Koepfli K.-P."/>
            <person name="Parker H.G."/>
            <person name="Pollinger J.P."/>
            <person name="Searle S.M.J."/>
            <person name="Sutter N.B."/>
            <person name="Thomas R."/>
            <person name="Webber C."/>
            <person name="Baldwin J."/>
            <person name="Abebe A."/>
            <person name="Abouelleil A."/>
            <person name="Aftuck L."/>
            <person name="Ait-Zahra M."/>
            <person name="Aldredge T."/>
            <person name="Allen N."/>
            <person name="An P."/>
            <person name="Anderson S."/>
            <person name="Antoine C."/>
            <person name="Arachchi H."/>
            <person name="Aslam A."/>
            <person name="Ayotte L."/>
            <person name="Bachantsang P."/>
            <person name="Barry A."/>
            <person name="Bayul T."/>
            <person name="Benamara M."/>
            <person name="Berlin A."/>
            <person name="Bessette D."/>
            <person name="Blitshteyn B."/>
            <person name="Bloom T."/>
            <person name="Blye J."/>
            <person name="Boguslavskiy L."/>
            <person name="Bonnet C."/>
            <person name="Boukhgalter B."/>
            <person name="Brown A."/>
            <person name="Cahill P."/>
            <person name="Calixte N."/>
            <person name="Camarata J."/>
            <person name="Cheshatsang Y."/>
            <person name="Chu J."/>
            <person name="Citroen M."/>
            <person name="Collymore A."/>
            <person name="Cooke P."/>
            <person name="Dawoe T."/>
            <person name="Daza R."/>
            <person name="Decktor K."/>
            <person name="DeGray S."/>
            <person name="Dhargay N."/>
            <person name="Dooley K."/>
            <person name="Dooley K."/>
            <person name="Dorje P."/>
            <person name="Dorjee K."/>
            <person name="Dorris L."/>
            <person name="Duffey N."/>
            <person name="Dupes A."/>
            <person name="Egbiremolen O."/>
            <person name="Elong R."/>
            <person name="Falk J."/>
            <person name="Farina A."/>
            <person name="Faro S."/>
            <person name="Ferguson D."/>
            <person name="Ferreira P."/>
            <person name="Fisher S."/>
            <person name="FitzGerald M."/>
            <person name="Foley K."/>
            <person name="Foley C."/>
            <person name="Franke A."/>
            <person name="Friedrich D."/>
            <person name="Gage D."/>
            <person name="Garber M."/>
            <person name="Gearin G."/>
            <person name="Giannoukos G."/>
            <person name="Goode T."/>
            <person name="Goyette A."/>
            <person name="Graham J."/>
            <person name="Grandbois E."/>
            <person name="Gyaltsen K."/>
            <person name="Hafez N."/>
            <person name="Hagopian D."/>
            <person name="Hagos B."/>
            <person name="Hall J."/>
            <person name="Healy C."/>
            <person name="Hegarty R."/>
            <person name="Honan T."/>
            <person name="Horn A."/>
            <person name="Houde N."/>
            <person name="Hughes L."/>
            <person name="Hunnicutt L."/>
            <person name="Husby M."/>
            <person name="Jester B."/>
            <person name="Jones C."/>
            <person name="Kamat A."/>
            <person name="Kanga B."/>
            <person name="Kells C."/>
            <person name="Khazanovich D."/>
            <person name="Kieu A.C."/>
            <person name="Kisner P."/>
            <person name="Kumar M."/>
            <person name="Lance K."/>
            <person name="Landers T."/>
            <person name="Lara M."/>
            <person name="Lee W."/>
            <person name="Leger J.-P."/>
            <person name="Lennon N."/>
            <person name="Leuper L."/>
            <person name="LeVine S."/>
            <person name="Liu J."/>
            <person name="Liu X."/>
            <person name="Lokyitsang Y."/>
            <person name="Lokyitsang T."/>
            <person name="Lui A."/>
            <person name="Macdonald J."/>
            <person name="Major J."/>
            <person name="Marabella R."/>
            <person name="Maru K."/>
            <person name="Matthews C."/>
            <person name="McDonough S."/>
            <person name="Mehta T."/>
            <person name="Meldrim J."/>
            <person name="Melnikov A."/>
            <person name="Meneus L."/>
            <person name="Mihalev A."/>
            <person name="Mihova T."/>
            <person name="Miller K."/>
            <person name="Mittelman R."/>
            <person name="Mlenga V."/>
            <person name="Mulrain L."/>
            <person name="Munson G."/>
            <person name="Navidi A."/>
            <person name="Naylor J."/>
            <person name="Nguyen T."/>
            <person name="Nguyen N."/>
            <person name="Nguyen C."/>
            <person name="Nguyen T."/>
            <person name="Nicol R."/>
            <person name="Norbu N."/>
            <person name="Norbu C."/>
            <person name="Novod N."/>
            <person name="Nyima T."/>
            <person name="Olandt P."/>
            <person name="O'Neill B."/>
            <person name="O'Neill K."/>
            <person name="Osman S."/>
            <person name="Oyono L."/>
            <person name="Patti C."/>
            <person name="Perrin D."/>
            <person name="Phunkhang P."/>
            <person name="Pierre F."/>
            <person name="Priest M."/>
            <person name="Rachupka A."/>
            <person name="Raghuraman S."/>
            <person name="Rameau R."/>
            <person name="Ray V."/>
            <person name="Raymond C."/>
            <person name="Rege F."/>
            <person name="Rise C."/>
            <person name="Rogers J."/>
            <person name="Rogov P."/>
            <person name="Sahalie J."/>
            <person name="Settipalli S."/>
            <person name="Sharpe T."/>
            <person name="Shea T."/>
            <person name="Sheehan M."/>
            <person name="Sherpa N."/>
            <person name="Shi J."/>
            <person name="Shih D."/>
            <person name="Sloan J."/>
            <person name="Smith C."/>
            <person name="Sparrow T."/>
            <person name="Stalker J."/>
            <person name="Stange-Thomann N."/>
            <person name="Stavropoulos S."/>
            <person name="Stone C."/>
            <person name="Stone S."/>
            <person name="Sykes S."/>
            <person name="Tchuinga P."/>
            <person name="Tenzing P."/>
            <person name="Tesfaye S."/>
            <person name="Thoulutsang D."/>
            <person name="Thoulutsang Y."/>
            <person name="Topham K."/>
            <person name="Topping I."/>
            <person name="Tsamla T."/>
            <person name="Vassiliev H."/>
            <person name="Venkataraman V."/>
            <person name="Vo A."/>
            <person name="Wangchuk T."/>
            <person name="Wangdi T."/>
            <person name="Weiand M."/>
            <person name="Wilkinson J."/>
            <person name="Wilson A."/>
            <person name="Yadav S."/>
            <person name="Yang S."/>
            <person name="Yang X."/>
            <person name="Young G."/>
            <person name="Yu Q."/>
            <person name="Zainoun J."/>
            <person name="Zembek L."/>
            <person name="Zimmer A."/>
            <person name="Lander E.S."/>
        </authorList>
    </citation>
    <scope>NUCLEOTIDE SEQUENCE [LARGE SCALE GENOMIC DNA]</scope>
    <source>
        <strain>Boxer</strain>
    </source>
</reference>
<comment type="function">
    <text evidence="2">Serine/threonine-protein kinase that regulates a number of transcription factors with key roles in cell fate determination. Positive effector of the non-canonical Wnt signaling pathway, acting downstream of WNT5A, MAP3K7/TAK1 and HIPK2. Negative regulator of the canonical Wnt/beta-catenin signaling pathway. Binds to and phosphorylates TCF7L2/TCF4 and LEF1, promoting the dissociation of the TCF7L2/LEF1/beta-catenin complex from DNA, as well as the ubiquitination and subsequent proteolysis of LEF1. Together these effects inhibit the transcriptional activation of canonical Wnt/beta-catenin target genes. Negative regulator of the Notch signaling pathway. Binds to and phosphorylates NOTCH1, thereby preventing the formation of a transcriptionally active ternary complex of NOTCH1, RBPJ/RBPSUH and MAML1. Negative regulator of the MYB family of transcription factors. Phosphorylation of MYB leads to its subsequent proteolysis while phosphorylation of MYBL1 and MYBL2 inhibits their interaction with the coactivator CREBBP. Other transcription factors may also be inhibited by direct phosphorylation of CREBBP itself. Acts downstream of IL6 and MAP3K7/TAK1 to phosphorylate STAT3, which is in turn required for activation of NLK by MAP3K7/TAK1. Upon IL1B stimulus, cooperates with ATF5 to activate the transactivation activity of C/EBP subfamily members. Phosphorylates ATF5 but also stabilizes ATF5 protein levels in a kinase-independent manner. Acts as an inhibitor of the mTORC1 complex in response to osmotic stress by mediating phosphorylation of RPTOR, thereby preventing recruitment of the mTORC1 complex to lysosomes.</text>
</comment>
<comment type="catalytic activity">
    <reaction evidence="1">
        <text>L-seryl-[protein] + ATP = O-phospho-L-seryl-[protein] + ADP + H(+)</text>
        <dbReference type="Rhea" id="RHEA:17989"/>
        <dbReference type="Rhea" id="RHEA-COMP:9863"/>
        <dbReference type="Rhea" id="RHEA-COMP:11604"/>
        <dbReference type="ChEBI" id="CHEBI:15378"/>
        <dbReference type="ChEBI" id="CHEBI:29999"/>
        <dbReference type="ChEBI" id="CHEBI:30616"/>
        <dbReference type="ChEBI" id="CHEBI:83421"/>
        <dbReference type="ChEBI" id="CHEBI:456216"/>
        <dbReference type="EC" id="2.7.11.24"/>
    </reaction>
</comment>
<comment type="catalytic activity">
    <reaction evidence="1">
        <text>L-threonyl-[protein] + ATP = O-phospho-L-threonyl-[protein] + ADP + H(+)</text>
        <dbReference type="Rhea" id="RHEA:46608"/>
        <dbReference type="Rhea" id="RHEA-COMP:11060"/>
        <dbReference type="Rhea" id="RHEA-COMP:11605"/>
        <dbReference type="ChEBI" id="CHEBI:15378"/>
        <dbReference type="ChEBI" id="CHEBI:30013"/>
        <dbReference type="ChEBI" id="CHEBI:30616"/>
        <dbReference type="ChEBI" id="CHEBI:61977"/>
        <dbReference type="ChEBI" id="CHEBI:456216"/>
        <dbReference type="EC" id="2.7.11.24"/>
    </reaction>
</comment>
<comment type="cofactor">
    <cofactor evidence="1">
        <name>Mg(2+)</name>
        <dbReference type="ChEBI" id="CHEBI:18420"/>
    </cofactor>
</comment>
<comment type="activity regulation">
    <text evidence="1">Activated by the non-canonical Wnt signaling pathway, in which WNT5A leads to activation of MAP3K7/TAK1 and HIPK2, which subsequently phosphorylates and activates this protein. Activated by dimerization and subsequent intermolecular autophosphorylation on Thr-298. Other cytokines such as IL6 may also activate this regulatory circuit (By similarity).</text>
</comment>
<comment type="subunit">
    <text evidence="1 2">Homodimer. Homodimerization is required for intermolecular autophosphorylation, kinase activation and nuclear localization (By similarity). May interact with components of cullin-RING-based SCF (SKP1-CUL1-F-box protein) E3 ubiquitin-protein ligase complexes (By similarity). Interacts with LEF1, MEF2A, MYBL1 and MYBL2 (By similarity). Interacts with the upstream activating kinases HIPK2 and MAP3K7/TAK1. Interaction with MAP3K7/TAK1 seems to be indirect, and may be mediated by other proteins such as STAT3, TAB1 and TAB2. Interacts with and phosphorylates a number of transcription factors including FOXO1, FOXO3, FOXO4, MYB, NOTCH1 and TCF7L2/TCF4. Interacts with DAPK3/ZIPK, and this interaction may disrupt interaction with transcription factors such as TCF7L2/TCF4. Forms a transcriptional repressor complex with CHD7, PPARG and SETDB1. Interacts with RNF138/NARF (By similarity). Interacts with ATF5; the interaction stabilizes ATF5 at the protein level in a kinase-independent manner (By similarity).</text>
</comment>
<comment type="subcellular location">
    <subcellularLocation>
        <location evidence="1">Nucleus</location>
    </subcellularLocation>
    <subcellularLocation>
        <location evidence="1">Cytoplasm</location>
    </subcellularLocation>
    <text evidence="1">Predominantly nuclear. A smaller fraction is cytoplasmic.</text>
</comment>
<comment type="domain">
    <text evidence="1">Contains a TQE activation loop motif in which autophosphorylation of the threonine residue (Thr-298) is sufficient for kinase activation. This mode of activation contrasts with that of classical MAP kinases, which contain a TXY activation loop motif in which phosphorylation of both the threonine and tyrosine residues is required for kinase activation.</text>
</comment>
<comment type="PTM">
    <text evidence="1">Phosphorylated on Thr-298. Intermolecular autophosphorylation on Thr-298 activates the enzyme.</text>
</comment>
<comment type="similarity">
    <text evidence="6">Belongs to the protein kinase superfamily. CMGC Ser/Thr protein kinase family. MAP kinase subfamily.</text>
</comment>
<proteinExistence type="inferred from homology"/>
<organism>
    <name type="scientific">Canis lupus familiaris</name>
    <name type="common">Dog</name>
    <name type="synonym">Canis familiaris</name>
    <dbReference type="NCBI Taxonomy" id="9615"/>
    <lineage>
        <taxon>Eukaryota</taxon>
        <taxon>Metazoa</taxon>
        <taxon>Chordata</taxon>
        <taxon>Craniata</taxon>
        <taxon>Vertebrata</taxon>
        <taxon>Euteleostomi</taxon>
        <taxon>Mammalia</taxon>
        <taxon>Eutheria</taxon>
        <taxon>Laurasiatheria</taxon>
        <taxon>Carnivora</taxon>
        <taxon>Caniformia</taxon>
        <taxon>Canidae</taxon>
        <taxon>Canis</taxon>
    </lineage>
</organism>
<keyword id="KW-0067">ATP-binding</keyword>
<keyword id="KW-0963">Cytoplasm</keyword>
<keyword id="KW-0418">Kinase</keyword>
<keyword id="KW-0460">Magnesium</keyword>
<keyword id="KW-0479">Metal-binding</keyword>
<keyword id="KW-0547">Nucleotide-binding</keyword>
<keyword id="KW-0539">Nucleus</keyword>
<keyword id="KW-0597">Phosphoprotein</keyword>
<keyword id="KW-1185">Reference proteome</keyword>
<keyword id="KW-0723">Serine/threonine-protein kinase</keyword>
<keyword id="KW-0804">Transcription</keyword>
<keyword id="KW-0805">Transcription regulation</keyword>
<keyword id="KW-0808">Transferase</keyword>
<keyword id="KW-0879">Wnt signaling pathway</keyword>